<dbReference type="EMBL" id="AE000520">
    <property type="protein sequence ID" value="AAC65858.1"/>
    <property type="molecule type" value="Genomic_DNA"/>
</dbReference>
<dbReference type="PIR" id="G71267">
    <property type="entry name" value="G71267"/>
</dbReference>
<dbReference type="SMR" id="O83876"/>
<dbReference type="IntAct" id="O83876">
    <property type="interactions" value="2"/>
</dbReference>
<dbReference type="STRING" id="243276.TP_0906"/>
<dbReference type="EnsemblBacteria" id="AAC65858">
    <property type="protein sequence ID" value="AAC65858"/>
    <property type="gene ID" value="TP_0906"/>
</dbReference>
<dbReference type="KEGG" id="tpa:TP_0906"/>
<dbReference type="KEGG" id="tpw:TPANIC_0906"/>
<dbReference type="eggNOG" id="COG1837">
    <property type="taxonomic scope" value="Bacteria"/>
</dbReference>
<dbReference type="HOGENOM" id="CLU_132074_1_0_12"/>
<dbReference type="OrthoDB" id="9812389at2"/>
<dbReference type="Proteomes" id="UP000000811">
    <property type="component" value="Chromosome"/>
</dbReference>
<dbReference type="GO" id="GO:0005737">
    <property type="term" value="C:cytoplasm"/>
    <property type="evidence" value="ECO:0007669"/>
    <property type="project" value="UniProtKB-SubCell"/>
</dbReference>
<dbReference type="GO" id="GO:0003723">
    <property type="term" value="F:RNA binding"/>
    <property type="evidence" value="ECO:0007669"/>
    <property type="project" value="UniProtKB-UniRule"/>
</dbReference>
<dbReference type="GO" id="GO:0071555">
    <property type="term" value="P:cell wall organization"/>
    <property type="evidence" value="ECO:0007669"/>
    <property type="project" value="UniProtKB-KW"/>
</dbReference>
<dbReference type="GO" id="GO:0009252">
    <property type="term" value="P:peptidoglycan biosynthetic process"/>
    <property type="evidence" value="ECO:0007669"/>
    <property type="project" value="UniProtKB-UniRule"/>
</dbReference>
<dbReference type="GO" id="GO:0008360">
    <property type="term" value="P:regulation of cell shape"/>
    <property type="evidence" value="ECO:0007669"/>
    <property type="project" value="UniProtKB-KW"/>
</dbReference>
<dbReference type="CDD" id="cd22533">
    <property type="entry name" value="KH-II_YlqC-like"/>
    <property type="match status" value="1"/>
</dbReference>
<dbReference type="Gene3D" id="3.30.300.20">
    <property type="match status" value="1"/>
</dbReference>
<dbReference type="HAMAP" id="MF_00088">
    <property type="entry name" value="KhpA"/>
    <property type="match status" value="1"/>
</dbReference>
<dbReference type="InterPro" id="IPR015946">
    <property type="entry name" value="KH_dom-like_a/b"/>
</dbReference>
<dbReference type="InterPro" id="IPR009019">
    <property type="entry name" value="KH_sf_prok-type"/>
</dbReference>
<dbReference type="InterPro" id="IPR020627">
    <property type="entry name" value="KhpA"/>
</dbReference>
<dbReference type="PANTHER" id="PTHR34654:SF1">
    <property type="entry name" value="RNA-BINDING PROTEIN KHPA"/>
    <property type="match status" value="1"/>
</dbReference>
<dbReference type="PANTHER" id="PTHR34654">
    <property type="entry name" value="UPF0109 PROTEIN SCO5592"/>
    <property type="match status" value="1"/>
</dbReference>
<dbReference type="Pfam" id="PF13083">
    <property type="entry name" value="KH_KhpA-B"/>
    <property type="match status" value="1"/>
</dbReference>
<dbReference type="SUPFAM" id="SSF54814">
    <property type="entry name" value="Prokaryotic type KH domain (KH-domain type II)"/>
    <property type="match status" value="1"/>
</dbReference>
<sequence>MVTMEEELIAYIARALVDRPGEVTVTKSPGEGLEILQLRVASEDVGKVIGKHGRIARALRTLLSASAHASQTRYALEIID</sequence>
<comment type="function">
    <text evidence="1">A probable RNA chaperone. Forms a complex with KhpB which binds to cellular RNA and controls its expression. Plays a role in peptidoglycan (PG) homeostasis and cell length regulation.</text>
</comment>
<comment type="subunit">
    <text evidence="1">Forms a complex with KhpB.</text>
</comment>
<comment type="subcellular location">
    <subcellularLocation>
        <location evidence="1">Cytoplasm</location>
    </subcellularLocation>
</comment>
<comment type="similarity">
    <text evidence="1">Belongs to the KhpA RNA-binding protein family.</text>
</comment>
<name>KHPA_TREPA</name>
<feature type="chain" id="PRO_0000163238" description="RNA-binding protein KhpA">
    <location>
        <begin position="1"/>
        <end position="80"/>
    </location>
</feature>
<feature type="domain" description="KH" evidence="1">
    <location>
        <begin position="33"/>
        <end position="80"/>
    </location>
</feature>
<protein>
    <recommendedName>
        <fullName evidence="1">RNA-binding protein KhpA</fullName>
    </recommendedName>
    <alternativeName>
        <fullName evidence="1">KH-domain protein A</fullName>
    </alternativeName>
</protein>
<keyword id="KW-0133">Cell shape</keyword>
<keyword id="KW-0961">Cell wall biogenesis/degradation</keyword>
<keyword id="KW-0143">Chaperone</keyword>
<keyword id="KW-0963">Cytoplasm</keyword>
<keyword id="KW-1185">Reference proteome</keyword>
<keyword id="KW-0694">RNA-binding</keyword>
<reference key="1">
    <citation type="journal article" date="1998" name="Science">
        <title>Complete genome sequence of Treponema pallidum, the syphilis spirochete.</title>
        <authorList>
            <person name="Fraser C.M."/>
            <person name="Norris S.J."/>
            <person name="Weinstock G.M."/>
            <person name="White O."/>
            <person name="Sutton G.G."/>
            <person name="Dodson R.J."/>
            <person name="Gwinn M.L."/>
            <person name="Hickey E.K."/>
            <person name="Clayton R.A."/>
            <person name="Ketchum K.A."/>
            <person name="Sodergren E."/>
            <person name="Hardham J.M."/>
            <person name="McLeod M.P."/>
            <person name="Salzberg S.L."/>
            <person name="Peterson J.D."/>
            <person name="Khalak H.G."/>
            <person name="Richardson D.L."/>
            <person name="Howell J.K."/>
            <person name="Chidambaram M."/>
            <person name="Utterback T.R."/>
            <person name="McDonald L.A."/>
            <person name="Artiach P."/>
            <person name="Bowman C."/>
            <person name="Cotton M.D."/>
            <person name="Fujii C."/>
            <person name="Garland S.A."/>
            <person name="Hatch B."/>
            <person name="Horst K."/>
            <person name="Roberts K.M."/>
            <person name="Sandusky M."/>
            <person name="Weidman J.F."/>
            <person name="Smith H.O."/>
            <person name="Venter J.C."/>
        </authorList>
    </citation>
    <scope>NUCLEOTIDE SEQUENCE [LARGE SCALE GENOMIC DNA]</scope>
    <source>
        <strain>Nichols</strain>
    </source>
</reference>
<accession>O83876</accession>
<proteinExistence type="inferred from homology"/>
<gene>
    <name evidence="1" type="primary">khpA</name>
    <name type="ordered locus">TP_0906</name>
</gene>
<organism>
    <name type="scientific">Treponema pallidum (strain Nichols)</name>
    <dbReference type="NCBI Taxonomy" id="243276"/>
    <lineage>
        <taxon>Bacteria</taxon>
        <taxon>Pseudomonadati</taxon>
        <taxon>Spirochaetota</taxon>
        <taxon>Spirochaetia</taxon>
        <taxon>Spirochaetales</taxon>
        <taxon>Treponemataceae</taxon>
        <taxon>Treponema</taxon>
    </lineage>
</organism>
<evidence type="ECO:0000255" key="1">
    <source>
        <dbReference type="HAMAP-Rule" id="MF_00088"/>
    </source>
</evidence>